<evidence type="ECO:0000250" key="1">
    <source>
        <dbReference type="UniProtKB" id="O60260"/>
    </source>
</evidence>
<evidence type="ECO:0000250" key="2">
    <source>
        <dbReference type="UniProtKB" id="Q9JK66"/>
    </source>
</evidence>
<evidence type="ECO:0000255" key="3">
    <source>
        <dbReference type="PROSITE-ProRule" id="PRU00214"/>
    </source>
</evidence>
<evidence type="ECO:0000255" key="4">
    <source>
        <dbReference type="PROSITE-ProRule" id="PRU01221"/>
    </source>
</evidence>
<evidence type="ECO:0000256" key="5">
    <source>
        <dbReference type="SAM" id="MobiDB-lite"/>
    </source>
</evidence>
<evidence type="ECO:0000269" key="6">
    <source>
    </source>
</evidence>
<evidence type="ECO:0000269" key="7">
    <source>
    </source>
</evidence>
<evidence type="ECO:0000269" key="8">
    <source>
    </source>
</evidence>
<evidence type="ECO:0000269" key="9">
    <source>
    </source>
</evidence>
<evidence type="ECO:0000269" key="10">
    <source>
    </source>
</evidence>
<evidence type="ECO:0000269" key="11">
    <source>
    </source>
</evidence>
<evidence type="ECO:0000269" key="12">
    <source>
    </source>
</evidence>
<evidence type="ECO:0000269" key="13">
    <source>
    </source>
</evidence>
<evidence type="ECO:0000269" key="14">
    <source>
    </source>
</evidence>
<evidence type="ECO:0000269" key="15">
    <source>
    </source>
</evidence>
<evidence type="ECO:0000269" key="16">
    <source>
    </source>
</evidence>
<evidence type="ECO:0000269" key="17">
    <source>
    </source>
</evidence>
<evidence type="ECO:0000303" key="18">
    <source>
    </source>
</evidence>
<evidence type="ECO:0000305" key="19"/>
<evidence type="ECO:0000305" key="20">
    <source>
    </source>
</evidence>
<evidence type="ECO:0000305" key="21">
    <source>
    </source>
</evidence>
<evidence type="ECO:0000312" key="22">
    <source>
        <dbReference type="MGI" id="MGI:1355296"/>
    </source>
</evidence>
<evidence type="ECO:0007744" key="23">
    <source>
    </source>
</evidence>
<evidence type="ECO:0007829" key="24">
    <source>
        <dbReference type="PDB" id="2ZEQ"/>
    </source>
</evidence>
<organism>
    <name type="scientific">Mus musculus</name>
    <name type="common">Mouse</name>
    <dbReference type="NCBI Taxonomy" id="10090"/>
    <lineage>
        <taxon>Eukaryota</taxon>
        <taxon>Metazoa</taxon>
        <taxon>Chordata</taxon>
        <taxon>Craniata</taxon>
        <taxon>Vertebrata</taxon>
        <taxon>Euteleostomi</taxon>
        <taxon>Mammalia</taxon>
        <taxon>Eutheria</taxon>
        <taxon>Euarchontoglires</taxon>
        <taxon>Glires</taxon>
        <taxon>Rodentia</taxon>
        <taxon>Myomorpha</taxon>
        <taxon>Muroidea</taxon>
        <taxon>Muridae</taxon>
        <taxon>Murinae</taxon>
        <taxon>Mus</taxon>
        <taxon>Mus</taxon>
    </lineage>
</organism>
<accession>Q9WVS6</accession>
<accession>Q2KHJ9</accession>
<accession>Q9ES22</accession>
<accession>Q9ES23</accession>
<keyword id="KW-0002">3D-structure</keyword>
<keyword id="KW-0025">Alternative splicing</keyword>
<keyword id="KW-0072">Autophagy</keyword>
<keyword id="KW-0966">Cell projection</keyword>
<keyword id="KW-0963">Cytoplasm</keyword>
<keyword id="KW-0256">Endoplasmic reticulum</keyword>
<keyword id="KW-1017">Isopeptide bond</keyword>
<keyword id="KW-0472">Membrane</keyword>
<keyword id="KW-0479">Metal-binding</keyword>
<keyword id="KW-0496">Mitochondrion</keyword>
<keyword id="KW-1000">Mitochondrion outer membrane</keyword>
<keyword id="KW-0539">Nucleus</keyword>
<keyword id="KW-0597">Phosphoprotein</keyword>
<keyword id="KW-1185">Reference proteome</keyword>
<keyword id="KW-0677">Repeat</keyword>
<keyword id="KW-0702">S-nitrosylation</keyword>
<keyword id="KW-0770">Synapse</keyword>
<keyword id="KW-0804">Transcription</keyword>
<keyword id="KW-0805">Transcription regulation</keyword>
<keyword id="KW-0808">Transferase</keyword>
<keyword id="KW-0832">Ubl conjugation</keyword>
<keyword id="KW-0833">Ubl conjugation pathway</keyword>
<keyword id="KW-0862">Zinc</keyword>
<keyword id="KW-0863">Zinc-finger</keyword>
<protein>
    <recommendedName>
        <fullName evidence="19">E3 ubiquitin-protein ligase parkin</fullName>
        <ecNumber evidence="1">2.3.2.31</ecNumber>
    </recommendedName>
    <alternativeName>
        <fullName evidence="1">Parkin RBR E3 ubiquitin-protein ligase</fullName>
    </alternativeName>
</protein>
<gene>
    <name evidence="1" type="primary">Prkn</name>
    <name evidence="22" type="synonym">Park2</name>
</gene>
<sequence length="464" mass="51618">MIVFVRFNSSYGFPVEVDSDTSILQLKEVVAKRQGVPADQLRVIFAGKELPNHLTVQNCDLEQQSIVHIVQRPRRRSHETNASGGDEPQSTSEGSIWESRSLTRVDLSSHTLPVDSVGLAVILDTDSKRDSEAARGPVKPTYNSFFIYCKGPCHKVQPGKLRVQCGTCKQATLTLAQGPSCWDDVLIPNRMSGECQSPDCPGTRAEFFFKCGAHPTSDKDTSVALNLITSNRRSIPCIACTDVRSPVLVFQCNHRHVICLDCFHLYCVTRLNDRQFVHDAQLGYSLPCVAGCPNSLIKELHHFRILGEEQYTRYQQYGAEECVLQMGGVLCPRPGCGAGLLPEQGQRKVTCEGGNGLGCGFVFCRDCKEAYHEGDCDSLLEPSGATSQAYRVDKRAAEQARWEEASKETIKKTTKPCPRCNVPIEKNGGCMHMKCPQPQCKLEWCWNCGCEWNRACMGDHWFDV</sequence>
<dbReference type="EC" id="2.3.2.31" evidence="1"/>
<dbReference type="EMBL" id="AB019558">
    <property type="protein sequence ID" value="BAA82404.1"/>
    <property type="molecule type" value="mRNA"/>
</dbReference>
<dbReference type="EMBL" id="AF250293">
    <property type="protein sequence ID" value="AAG13890.1"/>
    <property type="molecule type" value="mRNA"/>
</dbReference>
<dbReference type="EMBL" id="AF250294">
    <property type="protein sequence ID" value="AAG13891.1"/>
    <property type="molecule type" value="mRNA"/>
</dbReference>
<dbReference type="EMBL" id="AF250295">
    <property type="protein sequence ID" value="AAG13892.1"/>
    <property type="molecule type" value="mRNA"/>
</dbReference>
<dbReference type="EMBL" id="BC113204">
    <property type="protein sequence ID" value="AAI13205.1"/>
    <property type="molecule type" value="mRNA"/>
</dbReference>
<dbReference type="CCDS" id="CCDS79506.1">
    <molecule id="Q9WVS6-1"/>
</dbReference>
<dbReference type="RefSeq" id="NP_001304655.1">
    <property type="nucleotide sequence ID" value="NM_001317726.1"/>
</dbReference>
<dbReference type="RefSeq" id="NP_057903.1">
    <molecule id="Q9WVS6-1"/>
    <property type="nucleotide sequence ID" value="NM_016694.5"/>
</dbReference>
<dbReference type="RefSeq" id="XP_030105754.1">
    <molecule id="Q9WVS6-3"/>
    <property type="nucleotide sequence ID" value="XM_030249894.2"/>
</dbReference>
<dbReference type="PDB" id="1MG8">
    <property type="method" value="NMR"/>
    <property type="chains" value="A=1-76"/>
</dbReference>
<dbReference type="PDB" id="2ZEQ">
    <property type="method" value="X-ray"/>
    <property type="resolution" value="1.65 A"/>
    <property type="chains" value="A=1-76"/>
</dbReference>
<dbReference type="PDB" id="3B1L">
    <property type="method" value="X-ray"/>
    <property type="resolution" value="1.85 A"/>
    <property type="chains" value="X=1-76"/>
</dbReference>
<dbReference type="PDBsum" id="1MG8"/>
<dbReference type="PDBsum" id="2ZEQ"/>
<dbReference type="PDBsum" id="3B1L"/>
<dbReference type="BMRB" id="Q9WVS6"/>
<dbReference type="SMR" id="Q9WVS6"/>
<dbReference type="BioGRID" id="206136">
    <property type="interactions" value="36"/>
</dbReference>
<dbReference type="CORUM" id="Q9WVS6"/>
<dbReference type="DIP" id="DIP-37657N"/>
<dbReference type="FunCoup" id="Q9WVS6">
    <property type="interactions" value="848"/>
</dbReference>
<dbReference type="IntAct" id="Q9WVS6">
    <property type="interactions" value="14"/>
</dbReference>
<dbReference type="MINT" id="Q9WVS6"/>
<dbReference type="STRING" id="10090.ENSMUSP00000140587"/>
<dbReference type="iPTMnet" id="Q9WVS6"/>
<dbReference type="PhosphoSitePlus" id="Q9WVS6"/>
<dbReference type="SwissPalm" id="Q9WVS6"/>
<dbReference type="PaxDb" id="10090-ENSMUSP00000140587"/>
<dbReference type="ProteomicsDB" id="291593">
    <molecule id="Q9WVS6-1"/>
</dbReference>
<dbReference type="ProteomicsDB" id="291594">
    <molecule id="Q9WVS6-2"/>
</dbReference>
<dbReference type="ProteomicsDB" id="291595">
    <molecule id="Q9WVS6-3"/>
</dbReference>
<dbReference type="Antibodypedia" id="4264">
    <property type="antibodies" value="791 antibodies from 51 providers"/>
</dbReference>
<dbReference type="DNASU" id="50873"/>
<dbReference type="Ensembl" id="ENSMUST00000191124.7">
    <molecule id="Q9WVS6-1"/>
    <property type="protein sequence ID" value="ENSMUSP00000140587.2"/>
    <property type="gene ID" value="ENSMUSG00000023826.18"/>
</dbReference>
<dbReference type="GeneID" id="50873"/>
<dbReference type="KEGG" id="mmu:50873"/>
<dbReference type="UCSC" id="uc008akj.1">
    <molecule id="Q9WVS6-3"/>
    <property type="organism name" value="mouse"/>
</dbReference>
<dbReference type="UCSC" id="uc008akk.1">
    <molecule id="Q9WVS6-1"/>
    <property type="organism name" value="mouse"/>
</dbReference>
<dbReference type="AGR" id="MGI:1355296"/>
<dbReference type="CTD" id="5071"/>
<dbReference type="MGI" id="MGI:1355296">
    <property type="gene designation" value="Prkn"/>
</dbReference>
<dbReference type="VEuPathDB" id="HostDB:ENSMUSG00000023826"/>
<dbReference type="eggNOG" id="KOG0006">
    <property type="taxonomic scope" value="Eukaryota"/>
</dbReference>
<dbReference type="GeneTree" id="ENSGT00390000011034"/>
<dbReference type="HOGENOM" id="CLU_050804_0_0_1"/>
<dbReference type="InParanoid" id="Q9WVS6"/>
<dbReference type="OMA" id="DPKWDIK"/>
<dbReference type="PhylomeDB" id="Q9WVS6"/>
<dbReference type="Reactome" id="R-MMU-5205685">
    <property type="pathway name" value="PINK1-PRKN Mediated Mitophagy"/>
</dbReference>
<dbReference type="Reactome" id="R-MMU-5675482">
    <property type="pathway name" value="Regulation of necroptotic cell death"/>
</dbReference>
<dbReference type="Reactome" id="R-MMU-5689877">
    <property type="pathway name" value="Josephin domain DUBs"/>
</dbReference>
<dbReference type="Reactome" id="R-MMU-9646399">
    <property type="pathway name" value="Aggrephagy"/>
</dbReference>
<dbReference type="Reactome" id="R-MMU-983168">
    <property type="pathway name" value="Antigen processing: Ubiquitination &amp; Proteasome degradation"/>
</dbReference>
<dbReference type="UniPathway" id="UPA00143"/>
<dbReference type="BioGRID-ORCS" id="50873">
    <property type="hits" value="2 hits in 73 CRISPR screens"/>
</dbReference>
<dbReference type="ChiTaRS" id="Prkn">
    <property type="organism name" value="mouse"/>
</dbReference>
<dbReference type="EvolutionaryTrace" id="Q9WVS6"/>
<dbReference type="PRO" id="PR:Q9WVS6"/>
<dbReference type="Proteomes" id="UP000000589">
    <property type="component" value="Chromosome 17"/>
</dbReference>
<dbReference type="RNAct" id="Q9WVS6">
    <property type="molecule type" value="protein"/>
</dbReference>
<dbReference type="Bgee" id="ENSMUSG00000023826">
    <property type="expression patterns" value="Expressed in hindlimb stylopod muscle and 110 other cell types or tissues"/>
</dbReference>
<dbReference type="ExpressionAtlas" id="Q9WVS6">
    <property type="expression patterns" value="baseline and differential"/>
</dbReference>
<dbReference type="GO" id="GO:0016235">
    <property type="term" value="C:aggresome"/>
    <property type="evidence" value="ECO:0007669"/>
    <property type="project" value="Ensembl"/>
</dbReference>
<dbReference type="GO" id="GO:0005737">
    <property type="term" value="C:cytoplasm"/>
    <property type="evidence" value="ECO:0000314"/>
    <property type="project" value="MGI"/>
</dbReference>
<dbReference type="GO" id="GO:0005829">
    <property type="term" value="C:cytosol"/>
    <property type="evidence" value="ECO:0000250"/>
    <property type="project" value="UniProtKB"/>
</dbReference>
<dbReference type="GO" id="GO:0098691">
    <property type="term" value="C:dopaminergic synapse"/>
    <property type="evidence" value="ECO:0000314"/>
    <property type="project" value="SynGO"/>
</dbReference>
<dbReference type="GO" id="GO:0005789">
    <property type="term" value="C:endoplasmic reticulum membrane"/>
    <property type="evidence" value="ECO:0007669"/>
    <property type="project" value="Ensembl"/>
</dbReference>
<dbReference type="GO" id="GO:0098978">
    <property type="term" value="C:glutamatergic synapse"/>
    <property type="evidence" value="ECO:0007669"/>
    <property type="project" value="Ensembl"/>
</dbReference>
<dbReference type="GO" id="GO:0000139">
    <property type="term" value="C:Golgi membrane"/>
    <property type="evidence" value="ECO:0007669"/>
    <property type="project" value="Ensembl"/>
</dbReference>
<dbReference type="GO" id="GO:0005741">
    <property type="term" value="C:mitochondrial outer membrane"/>
    <property type="evidence" value="ECO:0007669"/>
    <property type="project" value="UniProtKB-SubCell"/>
</dbReference>
<dbReference type="GO" id="GO:0005739">
    <property type="term" value="C:mitochondrion"/>
    <property type="evidence" value="ECO:0000314"/>
    <property type="project" value="UniProtKB"/>
</dbReference>
<dbReference type="GO" id="GO:0099073">
    <property type="term" value="C:mitochondrion-derived vesicle"/>
    <property type="evidence" value="ECO:0007669"/>
    <property type="project" value="Ensembl"/>
</dbReference>
<dbReference type="GO" id="GO:0043005">
    <property type="term" value="C:neuron projection"/>
    <property type="evidence" value="ECO:0000314"/>
    <property type="project" value="MGI"/>
</dbReference>
<dbReference type="GO" id="GO:0043025">
    <property type="term" value="C:neuronal cell body"/>
    <property type="evidence" value="ECO:0007669"/>
    <property type="project" value="Ensembl"/>
</dbReference>
<dbReference type="GO" id="GO:0016607">
    <property type="term" value="C:nuclear speck"/>
    <property type="evidence" value="ECO:0007669"/>
    <property type="project" value="Ensembl"/>
</dbReference>
<dbReference type="GO" id="GO:0005634">
    <property type="term" value="C:nucleus"/>
    <property type="evidence" value="ECO:0000314"/>
    <property type="project" value="MGI"/>
</dbReference>
<dbReference type="GO" id="GO:1990452">
    <property type="term" value="C:Parkin-FBXW7-Cul1 ubiquitin ligase complex"/>
    <property type="evidence" value="ECO:0007669"/>
    <property type="project" value="Ensembl"/>
</dbReference>
<dbReference type="GO" id="GO:0048471">
    <property type="term" value="C:perinuclear region of cytoplasm"/>
    <property type="evidence" value="ECO:0007669"/>
    <property type="project" value="Ensembl"/>
</dbReference>
<dbReference type="GO" id="GO:0014069">
    <property type="term" value="C:postsynaptic density"/>
    <property type="evidence" value="ECO:0007669"/>
    <property type="project" value="UniProtKB-SubCell"/>
</dbReference>
<dbReference type="GO" id="GO:0032991">
    <property type="term" value="C:protein-containing complex"/>
    <property type="evidence" value="ECO:0000314"/>
    <property type="project" value="MGI"/>
</dbReference>
<dbReference type="GO" id="GO:0030672">
    <property type="term" value="C:synaptic vesicle membrane"/>
    <property type="evidence" value="ECO:0007669"/>
    <property type="project" value="Ensembl"/>
</dbReference>
<dbReference type="GO" id="GO:0043195">
    <property type="term" value="C:terminal bouton"/>
    <property type="evidence" value="ECO:0007669"/>
    <property type="project" value="Ensembl"/>
</dbReference>
<dbReference type="GO" id="GO:0003779">
    <property type="term" value="F:actin binding"/>
    <property type="evidence" value="ECO:0007669"/>
    <property type="project" value="Ensembl"/>
</dbReference>
<dbReference type="GO" id="GO:0008013">
    <property type="term" value="F:beta-catenin binding"/>
    <property type="evidence" value="ECO:0007669"/>
    <property type="project" value="Ensembl"/>
</dbReference>
<dbReference type="GO" id="GO:0097602">
    <property type="term" value="F:cullin family protein binding"/>
    <property type="evidence" value="ECO:0007669"/>
    <property type="project" value="Ensembl"/>
</dbReference>
<dbReference type="GO" id="GO:1990444">
    <property type="term" value="F:F-box domain binding"/>
    <property type="evidence" value="ECO:0007669"/>
    <property type="project" value="Ensembl"/>
</dbReference>
<dbReference type="GO" id="GO:0001664">
    <property type="term" value="F:G protein-coupled receptor binding"/>
    <property type="evidence" value="ECO:0007669"/>
    <property type="project" value="Ensembl"/>
</dbReference>
<dbReference type="GO" id="GO:0042826">
    <property type="term" value="F:histone deacetylase binding"/>
    <property type="evidence" value="ECO:0007669"/>
    <property type="project" value="Ensembl"/>
</dbReference>
<dbReference type="GO" id="GO:0030544">
    <property type="term" value="F:Hsp70 protein binding"/>
    <property type="evidence" value="ECO:0007669"/>
    <property type="project" value="Ensembl"/>
</dbReference>
<dbReference type="GO" id="GO:0042802">
    <property type="term" value="F:identical protein binding"/>
    <property type="evidence" value="ECO:0007669"/>
    <property type="project" value="Ensembl"/>
</dbReference>
<dbReference type="GO" id="GO:0019900">
    <property type="term" value="F:kinase binding"/>
    <property type="evidence" value="ECO:0000266"/>
    <property type="project" value="MGI"/>
</dbReference>
<dbReference type="GO" id="GO:0030165">
    <property type="term" value="F:PDZ domain binding"/>
    <property type="evidence" value="ECO:0007669"/>
    <property type="project" value="Ensembl"/>
</dbReference>
<dbReference type="GO" id="GO:0043274">
    <property type="term" value="F:phospholipase binding"/>
    <property type="evidence" value="ECO:0007669"/>
    <property type="project" value="Ensembl"/>
</dbReference>
<dbReference type="GO" id="GO:0019901">
    <property type="term" value="F:protein kinase binding"/>
    <property type="evidence" value="ECO:0007669"/>
    <property type="project" value="Ensembl"/>
</dbReference>
<dbReference type="GO" id="GO:0044877">
    <property type="term" value="F:protein-containing complex binding"/>
    <property type="evidence" value="ECO:0007669"/>
    <property type="project" value="Ensembl"/>
</dbReference>
<dbReference type="GO" id="GO:0003714">
    <property type="term" value="F:transcription corepressor activity"/>
    <property type="evidence" value="ECO:0007669"/>
    <property type="project" value="Ensembl"/>
</dbReference>
<dbReference type="GO" id="GO:0015631">
    <property type="term" value="F:tubulin binding"/>
    <property type="evidence" value="ECO:0007669"/>
    <property type="project" value="Ensembl"/>
</dbReference>
<dbReference type="GO" id="GO:0043130">
    <property type="term" value="F:ubiquitin binding"/>
    <property type="evidence" value="ECO:0000250"/>
    <property type="project" value="UniProtKB"/>
</dbReference>
<dbReference type="GO" id="GO:0031624">
    <property type="term" value="F:ubiquitin conjugating enzyme binding"/>
    <property type="evidence" value="ECO:0007669"/>
    <property type="project" value="Ensembl"/>
</dbReference>
<dbReference type="GO" id="GO:0061630">
    <property type="term" value="F:ubiquitin protein ligase activity"/>
    <property type="evidence" value="ECO:0000314"/>
    <property type="project" value="MGI"/>
</dbReference>
<dbReference type="GO" id="GO:0031625">
    <property type="term" value="F:ubiquitin protein ligase binding"/>
    <property type="evidence" value="ECO:0007669"/>
    <property type="project" value="Ensembl"/>
</dbReference>
<dbReference type="GO" id="GO:1990381">
    <property type="term" value="F:ubiquitin-specific protease binding"/>
    <property type="evidence" value="ECO:0007669"/>
    <property type="project" value="Ensembl"/>
</dbReference>
<dbReference type="GO" id="GO:0008270">
    <property type="term" value="F:zinc ion binding"/>
    <property type="evidence" value="ECO:0007669"/>
    <property type="project" value="UniProtKB-KW"/>
</dbReference>
<dbReference type="GO" id="GO:0008344">
    <property type="term" value="P:adult locomotory behavior"/>
    <property type="evidence" value="ECO:0000315"/>
    <property type="project" value="MGI"/>
</dbReference>
<dbReference type="GO" id="GO:0070842">
    <property type="term" value="P:aggresome assembly"/>
    <property type="evidence" value="ECO:0007669"/>
    <property type="project" value="Ensembl"/>
</dbReference>
<dbReference type="GO" id="GO:0000422">
    <property type="term" value="P:autophagy of mitochondrion"/>
    <property type="evidence" value="ECO:0000250"/>
    <property type="project" value="UniProtKB"/>
</dbReference>
<dbReference type="GO" id="GO:1904881">
    <property type="term" value="P:cellular response to hydrogen sulfide"/>
    <property type="evidence" value="ECO:0007669"/>
    <property type="project" value="Ensembl"/>
</dbReference>
<dbReference type="GO" id="GO:1905232">
    <property type="term" value="P:cellular response to L-glutamate"/>
    <property type="evidence" value="ECO:0007669"/>
    <property type="project" value="Ensembl"/>
</dbReference>
<dbReference type="GO" id="GO:1904845">
    <property type="term" value="P:cellular response to L-glutamine"/>
    <property type="evidence" value="ECO:0007669"/>
    <property type="project" value="Ensembl"/>
</dbReference>
<dbReference type="GO" id="GO:0071287">
    <property type="term" value="P:cellular response to manganese ion"/>
    <property type="evidence" value="ECO:0007669"/>
    <property type="project" value="Ensembl"/>
</dbReference>
<dbReference type="GO" id="GO:0034599">
    <property type="term" value="P:cellular response to oxidative stress"/>
    <property type="evidence" value="ECO:0007669"/>
    <property type="project" value="Ensembl"/>
</dbReference>
<dbReference type="GO" id="GO:0097237">
    <property type="term" value="P:cellular response to toxic substance"/>
    <property type="evidence" value="ECO:0000314"/>
    <property type="project" value="ParkinsonsUK-UCL"/>
</dbReference>
<dbReference type="GO" id="GO:0042417">
    <property type="term" value="P:dopamine metabolic process"/>
    <property type="evidence" value="ECO:0000315"/>
    <property type="project" value="MGI"/>
</dbReference>
<dbReference type="GO" id="GO:0051583">
    <property type="term" value="P:dopamine uptake involved in synaptic transmission"/>
    <property type="evidence" value="ECO:0000315"/>
    <property type="project" value="MGI"/>
</dbReference>
<dbReference type="GO" id="GO:0010994">
    <property type="term" value="P:free ubiquitin chain polymerization"/>
    <property type="evidence" value="ECO:0007669"/>
    <property type="project" value="Ensembl"/>
</dbReference>
<dbReference type="GO" id="GO:0007612">
    <property type="term" value="P:learning"/>
    <property type="evidence" value="ECO:0000315"/>
    <property type="project" value="MGI"/>
</dbReference>
<dbReference type="GO" id="GO:0007626">
    <property type="term" value="P:locomotory behavior"/>
    <property type="evidence" value="ECO:0000315"/>
    <property type="project" value="MGI"/>
</dbReference>
<dbReference type="GO" id="GO:0000266">
    <property type="term" value="P:mitochondrial fission"/>
    <property type="evidence" value="ECO:0000250"/>
    <property type="project" value="ParkinsonsUK-UCL"/>
</dbReference>
<dbReference type="GO" id="GO:0043653">
    <property type="term" value="P:mitochondrial fragmentation involved in apoptotic process"/>
    <property type="evidence" value="ECO:0007669"/>
    <property type="project" value="Ensembl"/>
</dbReference>
<dbReference type="GO" id="GO:0051646">
    <property type="term" value="P:mitochondrion localization"/>
    <property type="evidence" value="ECO:0007669"/>
    <property type="project" value="Ensembl"/>
</dbReference>
<dbReference type="GO" id="GO:0007005">
    <property type="term" value="P:mitochondrion organization"/>
    <property type="evidence" value="ECO:0000250"/>
    <property type="project" value="ParkinsonsUK-UCL"/>
</dbReference>
<dbReference type="GO" id="GO:0099074">
    <property type="term" value="P:mitochondrion to lysosome vesicle-mediated transport"/>
    <property type="evidence" value="ECO:0007669"/>
    <property type="project" value="Ensembl"/>
</dbReference>
<dbReference type="GO" id="GO:0000423">
    <property type="term" value="P:mitophagy"/>
    <property type="evidence" value="ECO:0000316"/>
    <property type="project" value="MGI"/>
</dbReference>
<dbReference type="GO" id="GO:0050804">
    <property type="term" value="P:modulation of chemical synaptic transmission"/>
    <property type="evidence" value="ECO:0000315"/>
    <property type="project" value="MGI"/>
</dbReference>
<dbReference type="GO" id="GO:0044828">
    <property type="term" value="P:negative regulation by host of viral genome replication"/>
    <property type="evidence" value="ECO:0007669"/>
    <property type="project" value="Ensembl"/>
</dbReference>
<dbReference type="GO" id="GO:0032232">
    <property type="term" value="P:negative regulation of actin filament bundle assembly"/>
    <property type="evidence" value="ECO:0007669"/>
    <property type="project" value="Ensembl"/>
</dbReference>
<dbReference type="GO" id="GO:0090090">
    <property type="term" value="P:negative regulation of canonical Wnt signaling pathway"/>
    <property type="evidence" value="ECO:0007669"/>
    <property type="project" value="Ensembl"/>
</dbReference>
<dbReference type="GO" id="GO:1902236">
    <property type="term" value="P:negative regulation of endoplasmic reticulum stress-induced intrinsic apoptotic signaling pathway"/>
    <property type="evidence" value="ECO:0000315"/>
    <property type="project" value="ParkinsonsUK-UCL"/>
</dbReference>
<dbReference type="GO" id="GO:1903382">
    <property type="term" value="P:negative regulation of endoplasmic reticulum stress-induced neuron intrinsic apoptotic signaling pathway"/>
    <property type="evidence" value="ECO:0000315"/>
    <property type="project" value="ParkinsonsUK-UCL"/>
</dbReference>
<dbReference type="GO" id="GO:0090394">
    <property type="term" value="P:negative regulation of excitatory postsynaptic potential"/>
    <property type="evidence" value="ECO:0007669"/>
    <property type="project" value="Ensembl"/>
</dbReference>
<dbReference type="GO" id="GO:1903542">
    <property type="term" value="P:negative regulation of exosomal secretion"/>
    <property type="evidence" value="ECO:0007669"/>
    <property type="project" value="Ensembl"/>
</dbReference>
<dbReference type="GO" id="GO:0010629">
    <property type="term" value="P:negative regulation of gene expression"/>
    <property type="evidence" value="ECO:0007669"/>
    <property type="project" value="Ensembl"/>
</dbReference>
<dbReference type="GO" id="GO:0046676">
    <property type="term" value="P:negative regulation of insulin secretion"/>
    <property type="evidence" value="ECO:0000266"/>
    <property type="project" value="MGI"/>
</dbReference>
<dbReference type="GO" id="GO:1905366">
    <property type="term" value="P:negative regulation of intralumenal vesicle formation"/>
    <property type="evidence" value="ECO:0007669"/>
    <property type="project" value="Ensembl"/>
</dbReference>
<dbReference type="GO" id="GO:1902254">
    <property type="term" value="P:negative regulation of intrinsic apoptotic signaling pathway by p53 class mediator"/>
    <property type="evidence" value="ECO:0007669"/>
    <property type="project" value="Ensembl"/>
</dbReference>
<dbReference type="GO" id="GO:0046329">
    <property type="term" value="P:negative regulation of JNK cascade"/>
    <property type="evidence" value="ECO:0000250"/>
    <property type="project" value="ParkinsonsUK-UCL"/>
</dbReference>
<dbReference type="GO" id="GO:0090258">
    <property type="term" value="P:negative regulation of mitochondrial fission"/>
    <property type="evidence" value="ECO:0007669"/>
    <property type="project" value="Ensembl"/>
</dbReference>
<dbReference type="GO" id="GO:0010637">
    <property type="term" value="P:negative regulation of mitochondrial fusion"/>
    <property type="evidence" value="ECO:0000250"/>
    <property type="project" value="ParkinsonsUK-UCL"/>
</dbReference>
<dbReference type="GO" id="GO:0043524">
    <property type="term" value="P:negative regulation of neuron apoptotic process"/>
    <property type="evidence" value="ECO:0000315"/>
    <property type="project" value="ParkinsonsUK-UCL"/>
</dbReference>
<dbReference type="GO" id="GO:1903377">
    <property type="term" value="P:negative regulation of oxidative stress-induced neuron intrinsic apoptotic signaling pathway"/>
    <property type="evidence" value="ECO:0000315"/>
    <property type="project" value="ParkinsonsUK-UCL"/>
</dbReference>
<dbReference type="GO" id="GO:1903427">
    <property type="term" value="P:negative regulation of reactive oxygen species biosynthetic process"/>
    <property type="evidence" value="ECO:0007669"/>
    <property type="project" value="Ensembl"/>
</dbReference>
<dbReference type="GO" id="GO:0090201">
    <property type="term" value="P:negative regulation of release of cytochrome c from mitochondria"/>
    <property type="evidence" value="ECO:0007669"/>
    <property type="project" value="Ensembl"/>
</dbReference>
<dbReference type="GO" id="GO:1904049">
    <property type="term" value="P:negative regulation of spontaneous neurotransmitter secretion"/>
    <property type="evidence" value="ECO:0007669"/>
    <property type="project" value="Ensembl"/>
</dbReference>
<dbReference type="GO" id="GO:0051967">
    <property type="term" value="P:negative regulation of synaptic transmission, glutamatergic"/>
    <property type="evidence" value="ECO:0007669"/>
    <property type="project" value="Ensembl"/>
</dbReference>
<dbReference type="GO" id="GO:0000122">
    <property type="term" value="P:negative regulation of transcription by RNA polymerase II"/>
    <property type="evidence" value="ECO:0007669"/>
    <property type="project" value="Ensembl"/>
</dbReference>
<dbReference type="GO" id="GO:0070050">
    <property type="term" value="P:neuron cellular homeostasis"/>
    <property type="evidence" value="ECO:0000250"/>
    <property type="project" value="ParkinsonsUK-UCL"/>
</dbReference>
<dbReference type="GO" id="GO:0042415">
    <property type="term" value="P:norepinephrine metabolic process"/>
    <property type="evidence" value="ECO:0000315"/>
    <property type="project" value="MGI"/>
</dbReference>
<dbReference type="GO" id="GO:0043065">
    <property type="term" value="P:positive regulation of apoptotic process"/>
    <property type="evidence" value="ECO:0007669"/>
    <property type="project" value="Ensembl"/>
</dbReference>
<dbReference type="GO" id="GO:2001171">
    <property type="term" value="P:positive regulation of ATP biosynthetic process"/>
    <property type="evidence" value="ECO:0007669"/>
    <property type="project" value="Ensembl"/>
</dbReference>
<dbReference type="GO" id="GO:0043123">
    <property type="term" value="P:positive regulation of canonical NF-kappaB signal transduction"/>
    <property type="evidence" value="ECO:0007669"/>
    <property type="project" value="Ensembl"/>
</dbReference>
<dbReference type="GO" id="GO:1903861">
    <property type="term" value="P:positive regulation of dendrite extension"/>
    <property type="evidence" value="ECO:0000316"/>
    <property type="project" value="ParkinsonsUK-UCL"/>
</dbReference>
<dbReference type="GO" id="GO:0010628">
    <property type="term" value="P:positive regulation of gene expression"/>
    <property type="evidence" value="ECO:0007669"/>
    <property type="project" value="Ensembl"/>
</dbReference>
<dbReference type="GO" id="GO:0035774">
    <property type="term" value="P:positive regulation of insulin secretion involved in cellular response to glucose stimulus"/>
    <property type="evidence" value="ECO:0007669"/>
    <property type="project" value="Ensembl"/>
</dbReference>
<dbReference type="GO" id="GO:0090141">
    <property type="term" value="P:positive regulation of mitochondrial fission"/>
    <property type="evidence" value="ECO:0000250"/>
    <property type="project" value="ParkinsonsUK-UCL"/>
</dbReference>
<dbReference type="GO" id="GO:0010636">
    <property type="term" value="P:positive regulation of mitochondrial fusion"/>
    <property type="evidence" value="ECO:0007669"/>
    <property type="project" value="Ensembl"/>
</dbReference>
<dbReference type="GO" id="GO:0010918">
    <property type="term" value="P:positive regulation of mitochondrial membrane potential"/>
    <property type="evidence" value="ECO:0007669"/>
    <property type="project" value="Ensembl"/>
</dbReference>
<dbReference type="GO" id="GO:0051582">
    <property type="term" value="P:positive regulation of neurotransmitter uptake"/>
    <property type="evidence" value="ECO:0007669"/>
    <property type="project" value="Ensembl"/>
</dbReference>
<dbReference type="GO" id="GO:0032436">
    <property type="term" value="P:positive regulation of proteasomal ubiquitin-dependent protein catabolic process"/>
    <property type="evidence" value="ECO:0000315"/>
    <property type="project" value="ParkinsonsUK-UCL"/>
</dbReference>
<dbReference type="GO" id="GO:1902530">
    <property type="term" value="P:positive regulation of protein linear polyubiquitination"/>
    <property type="evidence" value="ECO:0000315"/>
    <property type="project" value="ParkinsonsUK-UCL"/>
</dbReference>
<dbReference type="GO" id="GO:1905477">
    <property type="term" value="P:positive regulation of protein localization to membrane"/>
    <property type="evidence" value="ECO:0007669"/>
    <property type="project" value="Ensembl"/>
</dbReference>
<dbReference type="GO" id="GO:0045944">
    <property type="term" value="P:positive regulation of transcription by RNA polymerase II"/>
    <property type="evidence" value="ECO:0007669"/>
    <property type="project" value="Ensembl"/>
</dbReference>
<dbReference type="GO" id="GO:1903265">
    <property type="term" value="P:positive regulation of tumor necrosis factor-mediated signaling pathway"/>
    <property type="evidence" value="ECO:0007669"/>
    <property type="project" value="Ensembl"/>
</dbReference>
<dbReference type="GO" id="GO:1905091">
    <property type="term" value="P:positive regulation of type 2 mitophagy"/>
    <property type="evidence" value="ECO:0007669"/>
    <property type="project" value="Ensembl"/>
</dbReference>
<dbReference type="GO" id="GO:0043161">
    <property type="term" value="P:proteasome-mediated ubiquitin-dependent protein catabolic process"/>
    <property type="evidence" value="ECO:0007669"/>
    <property type="project" value="Ensembl"/>
</dbReference>
<dbReference type="GO" id="GO:0051865">
    <property type="term" value="P:protein autoubiquitination"/>
    <property type="evidence" value="ECO:0000250"/>
    <property type="project" value="ParkinsonsUK-UCL"/>
</dbReference>
<dbReference type="GO" id="GO:0030163">
    <property type="term" value="P:protein catabolic process"/>
    <property type="evidence" value="ECO:0000315"/>
    <property type="project" value="ParkinsonsUK-UCL"/>
</dbReference>
<dbReference type="GO" id="GO:0031648">
    <property type="term" value="P:protein destabilization"/>
    <property type="evidence" value="ECO:0000315"/>
    <property type="project" value="ParkinsonsUK-UCL"/>
</dbReference>
<dbReference type="GO" id="GO:0070979">
    <property type="term" value="P:protein K11-linked ubiquitination"/>
    <property type="evidence" value="ECO:0000250"/>
    <property type="project" value="UniProtKB"/>
</dbReference>
<dbReference type="GO" id="GO:0070936">
    <property type="term" value="P:protein K48-linked ubiquitination"/>
    <property type="evidence" value="ECO:0007669"/>
    <property type="project" value="Ensembl"/>
</dbReference>
<dbReference type="GO" id="GO:0085020">
    <property type="term" value="P:protein K6-linked ubiquitination"/>
    <property type="evidence" value="ECO:0000250"/>
    <property type="project" value="UniProtKB"/>
</dbReference>
<dbReference type="GO" id="GO:0070534">
    <property type="term" value="P:protein K63-linked ubiquitination"/>
    <property type="evidence" value="ECO:0000250"/>
    <property type="project" value="UniProtKB"/>
</dbReference>
<dbReference type="GO" id="GO:0070585">
    <property type="term" value="P:protein localization to mitochondrion"/>
    <property type="evidence" value="ECO:0000315"/>
    <property type="project" value="ParkinsonsUK-UCL"/>
</dbReference>
<dbReference type="GO" id="GO:0006513">
    <property type="term" value="P:protein monoubiquitination"/>
    <property type="evidence" value="ECO:0000250"/>
    <property type="project" value="UniProtKB"/>
</dbReference>
<dbReference type="GO" id="GO:0000209">
    <property type="term" value="P:protein polyubiquitination"/>
    <property type="evidence" value="ECO:0000250"/>
    <property type="project" value="ParkinsonsUK-UCL"/>
</dbReference>
<dbReference type="GO" id="GO:0050821">
    <property type="term" value="P:protein stabilization"/>
    <property type="evidence" value="ECO:0007669"/>
    <property type="project" value="Ensembl"/>
</dbReference>
<dbReference type="GO" id="GO:0016567">
    <property type="term" value="P:protein ubiquitination"/>
    <property type="evidence" value="ECO:0000250"/>
    <property type="project" value="UniProtKB"/>
</dbReference>
<dbReference type="GO" id="GO:0010506">
    <property type="term" value="P:regulation of autophagy"/>
    <property type="evidence" value="ECO:0000250"/>
    <property type="project" value="UniProtKB"/>
</dbReference>
<dbReference type="GO" id="GO:1900407">
    <property type="term" value="P:regulation of cellular response to oxidative stress"/>
    <property type="evidence" value="ECO:0000250"/>
    <property type="project" value="ParkinsonsUK-UCL"/>
</dbReference>
<dbReference type="GO" id="GO:0042053">
    <property type="term" value="P:regulation of dopamine metabolic process"/>
    <property type="evidence" value="ECO:0007669"/>
    <property type="project" value="Ensembl"/>
</dbReference>
<dbReference type="GO" id="GO:0051881">
    <property type="term" value="P:regulation of mitochondrial membrane potential"/>
    <property type="evidence" value="ECO:0000316"/>
    <property type="project" value="ParkinsonsUK-UCL"/>
</dbReference>
<dbReference type="GO" id="GO:0010821">
    <property type="term" value="P:regulation of mitochondrion organization"/>
    <property type="evidence" value="ECO:0000250"/>
    <property type="project" value="ParkinsonsUK-UCL"/>
</dbReference>
<dbReference type="GO" id="GO:0046928">
    <property type="term" value="P:regulation of neurotransmitter secretion"/>
    <property type="evidence" value="ECO:0000315"/>
    <property type="project" value="MGI"/>
</dbReference>
<dbReference type="GO" id="GO:0099072">
    <property type="term" value="P:regulation of postsynaptic membrane neurotransmitter receptor levels"/>
    <property type="evidence" value="ECO:0007669"/>
    <property type="project" value="Ensembl"/>
</dbReference>
<dbReference type="GO" id="GO:1900242">
    <property type="term" value="P:regulation of synaptic vesicle endocytosis"/>
    <property type="evidence" value="ECO:0000314"/>
    <property type="project" value="SynGO"/>
</dbReference>
<dbReference type="GO" id="GO:0140251">
    <property type="term" value="P:regulation protein catabolic process at presynapse"/>
    <property type="evidence" value="ECO:0000314"/>
    <property type="project" value="SynGO"/>
</dbReference>
<dbReference type="GO" id="GO:0051412">
    <property type="term" value="P:response to corticosterone"/>
    <property type="evidence" value="ECO:0007669"/>
    <property type="project" value="Ensembl"/>
</dbReference>
<dbReference type="GO" id="GO:1904643">
    <property type="term" value="P:response to curcumin"/>
    <property type="evidence" value="ECO:0007669"/>
    <property type="project" value="Ensembl"/>
</dbReference>
<dbReference type="GO" id="GO:0034976">
    <property type="term" value="P:response to endoplasmic reticulum stress"/>
    <property type="evidence" value="ECO:0000315"/>
    <property type="project" value="ParkinsonsUK-UCL"/>
</dbReference>
<dbReference type="GO" id="GO:0014850">
    <property type="term" value="P:response to muscle activity"/>
    <property type="evidence" value="ECO:0007669"/>
    <property type="project" value="Ensembl"/>
</dbReference>
<dbReference type="GO" id="GO:0006979">
    <property type="term" value="P:response to oxidative stress"/>
    <property type="evidence" value="ECO:0000250"/>
    <property type="project" value="ParkinsonsUK-UCL"/>
</dbReference>
<dbReference type="GO" id="GO:0006986">
    <property type="term" value="P:response to unfolded protein"/>
    <property type="evidence" value="ECO:0007669"/>
    <property type="project" value="Ensembl"/>
</dbReference>
<dbReference type="GO" id="GO:0009410">
    <property type="term" value="P:response to xenobiotic stimulus"/>
    <property type="evidence" value="ECO:0007669"/>
    <property type="project" value="Ensembl"/>
</dbReference>
<dbReference type="GO" id="GO:0001964">
    <property type="term" value="P:startle response"/>
    <property type="evidence" value="ECO:0000315"/>
    <property type="project" value="MGI"/>
</dbReference>
<dbReference type="GO" id="GO:0001963">
    <property type="term" value="P:synaptic transmission, dopaminergic"/>
    <property type="evidence" value="ECO:0000315"/>
    <property type="project" value="MGI"/>
</dbReference>
<dbReference type="GO" id="GO:0035249">
    <property type="term" value="P:synaptic transmission, glutamatergic"/>
    <property type="evidence" value="ECO:0000315"/>
    <property type="project" value="MGI"/>
</dbReference>
<dbReference type="GO" id="GO:0061734">
    <property type="term" value="P:type 2 mitophagy"/>
    <property type="evidence" value="ECO:0007669"/>
    <property type="project" value="Ensembl"/>
</dbReference>
<dbReference type="GO" id="GO:0006511">
    <property type="term" value="P:ubiquitin-dependent protein catabolic process"/>
    <property type="evidence" value="ECO:0000250"/>
    <property type="project" value="ParkinsonsUK-UCL"/>
</dbReference>
<dbReference type="CDD" id="cd20340">
    <property type="entry name" value="BRcat_RBR_parkin"/>
    <property type="match status" value="1"/>
</dbReference>
<dbReference type="CDD" id="cd20357">
    <property type="entry name" value="Rcat_RBR_parkin"/>
    <property type="match status" value="1"/>
</dbReference>
<dbReference type="CDD" id="cd16627">
    <property type="entry name" value="RING-HC_RBR_parkin"/>
    <property type="match status" value="1"/>
</dbReference>
<dbReference type="CDD" id="cd21382">
    <property type="entry name" value="RING0_parkin"/>
    <property type="match status" value="1"/>
</dbReference>
<dbReference type="CDD" id="cd01798">
    <property type="entry name" value="Ubl_parkin"/>
    <property type="match status" value="1"/>
</dbReference>
<dbReference type="FunFam" id="1.20.120.1750:FF:000009">
    <property type="entry name" value="E3 ubiquitin-protein ligase parkin"/>
    <property type="match status" value="1"/>
</dbReference>
<dbReference type="FunFam" id="2.20.25.20:FF:000008">
    <property type="entry name" value="E3 ubiquitin-protein ligase parkin"/>
    <property type="match status" value="1"/>
</dbReference>
<dbReference type="FunFam" id="3.10.20.90:FF:000142">
    <property type="entry name" value="E3 ubiquitin-protein ligase parkin"/>
    <property type="match status" value="1"/>
</dbReference>
<dbReference type="Gene3D" id="1.20.120.1750">
    <property type="match status" value="1"/>
</dbReference>
<dbReference type="Gene3D" id="2.20.25.20">
    <property type="match status" value="1"/>
</dbReference>
<dbReference type="Gene3D" id="3.10.20.90">
    <property type="entry name" value="Phosphatidylinositol 3-kinase Catalytic Subunit, Chain A, domain 1"/>
    <property type="match status" value="1"/>
</dbReference>
<dbReference type="InterPro" id="IPR047534">
    <property type="entry name" value="BRcat_RBR_parkin"/>
</dbReference>
<dbReference type="InterPro" id="IPR002867">
    <property type="entry name" value="IBR_dom"/>
</dbReference>
<dbReference type="InterPro" id="IPR003977">
    <property type="entry name" value="Parkin"/>
</dbReference>
<dbReference type="InterPro" id="IPR054694">
    <property type="entry name" value="Parkin-like_IBR"/>
</dbReference>
<dbReference type="InterPro" id="IPR041565">
    <property type="entry name" value="Parkin_Znf-RING"/>
</dbReference>
<dbReference type="InterPro" id="IPR047536">
    <property type="entry name" value="Rcat_RBR_parkin"/>
</dbReference>
<dbReference type="InterPro" id="IPR047535">
    <property type="entry name" value="RING-HC_RBR_parkin"/>
</dbReference>
<dbReference type="InterPro" id="IPR044066">
    <property type="entry name" value="TRIAD_supradom"/>
</dbReference>
<dbReference type="InterPro" id="IPR015496">
    <property type="entry name" value="Ubiquilin"/>
</dbReference>
<dbReference type="InterPro" id="IPR000626">
    <property type="entry name" value="Ubiquitin-like_dom"/>
</dbReference>
<dbReference type="InterPro" id="IPR029071">
    <property type="entry name" value="Ubiquitin-like_domsf"/>
</dbReference>
<dbReference type="InterPro" id="IPR041170">
    <property type="entry name" value="Znf-RING_14"/>
</dbReference>
<dbReference type="PANTHER" id="PTHR10677">
    <property type="entry name" value="UBIQUILIN"/>
    <property type="match status" value="1"/>
</dbReference>
<dbReference type="PANTHER" id="PTHR10677:SF40">
    <property type="entry name" value="UBIQUITIN-LIKE DOMAIN-CONTAINING PROTEIN"/>
    <property type="match status" value="1"/>
</dbReference>
<dbReference type="Pfam" id="PF22605">
    <property type="entry name" value="IBR_2"/>
    <property type="match status" value="1"/>
</dbReference>
<dbReference type="Pfam" id="PF00240">
    <property type="entry name" value="ubiquitin"/>
    <property type="match status" value="1"/>
</dbReference>
<dbReference type="Pfam" id="PF17976">
    <property type="entry name" value="zf-RING_12"/>
    <property type="match status" value="1"/>
</dbReference>
<dbReference type="Pfam" id="PF17978">
    <property type="entry name" value="zf-RING_14"/>
    <property type="match status" value="1"/>
</dbReference>
<dbReference type="PIRSF" id="PIRSF037880">
    <property type="entry name" value="Parkin"/>
    <property type="match status" value="1"/>
</dbReference>
<dbReference type="PRINTS" id="PR01475">
    <property type="entry name" value="PARKIN"/>
</dbReference>
<dbReference type="SMART" id="SM00647">
    <property type="entry name" value="IBR"/>
    <property type="match status" value="2"/>
</dbReference>
<dbReference type="SMART" id="SM00213">
    <property type="entry name" value="UBQ"/>
    <property type="match status" value="1"/>
</dbReference>
<dbReference type="SUPFAM" id="SSF57850">
    <property type="entry name" value="RING/U-box"/>
    <property type="match status" value="2"/>
</dbReference>
<dbReference type="SUPFAM" id="SSF54236">
    <property type="entry name" value="Ubiquitin-like"/>
    <property type="match status" value="1"/>
</dbReference>
<dbReference type="PROSITE" id="PS51873">
    <property type="entry name" value="TRIAD"/>
    <property type="match status" value="1"/>
</dbReference>
<dbReference type="PROSITE" id="PS50053">
    <property type="entry name" value="UBIQUITIN_2"/>
    <property type="match status" value="1"/>
</dbReference>
<reference key="1">
    <citation type="journal article" date="2000" name="Mamm. Genome">
        <title>Molecular cloning, gene expression, and identification of a splicing variant of the mouse parkin gene.</title>
        <authorList>
            <person name="Kitada T."/>
            <person name="Asakawa S."/>
            <person name="Minoshima S."/>
            <person name="Mizuno Y."/>
            <person name="Shimizu N."/>
        </authorList>
    </citation>
    <scope>NUCLEOTIDE SEQUENCE [MRNA] (ISOFORM 1)</scope>
    <scope>TISSUE SPECIFICITY</scope>
    <scope>SUBCELLULAR LOCATION</scope>
    <source>
        <tissue>Skeletal muscle</tissue>
    </source>
</reference>
<reference key="2">
    <citation type="journal article" date="2000" name="Eur. J. Neurosci.">
        <title>Parkin expression in the adult mouse brain.</title>
        <authorList>
            <person name="Stichel C.C."/>
            <person name="Augustin M."/>
            <person name="Kuehn K."/>
            <person name="Zhu X.-R."/>
            <person name="Engels P."/>
            <person name="Ullmer C."/>
            <person name="Luebbert H."/>
        </authorList>
    </citation>
    <scope>NUCLEOTIDE SEQUENCE [MRNA] (ISOFORMS 2 AND 3)</scope>
    <scope>TISSUE SPECIFICITY</scope>
    <scope>SUBCELLULAR LOCATION</scope>
    <source>
        <strain>BALB/cJ</strain>
        <tissue>Kidney</tissue>
    </source>
</reference>
<reference key="3">
    <citation type="journal article" date="2004" name="Genome Res.">
        <title>The status, quality, and expansion of the NIH full-length cDNA project: the Mammalian Gene Collection (MGC).</title>
        <authorList>
            <consortium name="The MGC Project Team"/>
        </authorList>
    </citation>
    <scope>NUCLEOTIDE SEQUENCE [LARGE SCALE MRNA] (ISOFORM 1)</scope>
</reference>
<reference key="4">
    <citation type="journal article" date="2001" name="Brain Res. Dev. Brain Res.">
        <title>Differential expression and tissue distribution of parkin isoforms during mouse development.</title>
        <authorList>
            <person name="Huynh D.P."/>
            <person name="Dy M."/>
            <person name="Nguyen D."/>
            <person name="Kiehl T.-R."/>
            <person name="Pulst S.M."/>
        </authorList>
    </citation>
    <scope>SUBCELLULAR LOCATION</scope>
    <scope>TISSUE SPECIFICITY</scope>
    <scope>DEVELOPMENTAL STAGE</scope>
</reference>
<reference key="5">
    <citation type="journal article" date="2004" name="Science">
        <title>S-nitrosylation of parkin regulates ubiquitination and compromises parkin's protective function.</title>
        <authorList>
            <person name="Chung K.K.K."/>
            <person name="Thomas B."/>
            <person name="Li X."/>
            <person name="Pletnikova O."/>
            <person name="Troncoso J.C."/>
            <person name="Marsh L."/>
            <person name="Dawson V.L."/>
            <person name="Dawson T.M."/>
        </authorList>
    </citation>
    <scope>FUNCTION IN UBIQUITINATION</scope>
    <scope>S-NITROSYLATION</scope>
</reference>
<reference key="6">
    <citation type="journal article" date="2009" name="Nat. Cell Biol.">
        <title>Transcriptional repression of p53 by parkin and impairment by mutations associated with autosomal recessive juvenile Parkinson's disease.</title>
        <authorList>
            <person name="da Costa C.A."/>
            <person name="Sunyach C."/>
            <person name="Giaime E."/>
            <person name="West A."/>
            <person name="Corti O."/>
            <person name="Brice A."/>
            <person name="Safe S."/>
            <person name="Abou-Sleiman P.M."/>
            <person name="Wood N.W."/>
            <person name="Takahashi H."/>
            <person name="Goldberg M.S."/>
            <person name="Shen J."/>
            <person name="Checler F."/>
        </authorList>
    </citation>
    <scope>FUNCTION IN APOPTOSIS</scope>
    <scope>DISRUPTION PHENOTYPE</scope>
</reference>
<reference key="7">
    <citation type="journal article" date="2010" name="Cell">
        <title>A tissue-specific atlas of mouse protein phosphorylation and expression.</title>
        <authorList>
            <person name="Huttlin E.L."/>
            <person name="Jedrychowski M.P."/>
            <person name="Elias J.E."/>
            <person name="Goswami T."/>
            <person name="Rad R."/>
            <person name="Beausoleil S.A."/>
            <person name="Villen J."/>
            <person name="Haas W."/>
            <person name="Sowa M.E."/>
            <person name="Gygi S.P."/>
        </authorList>
    </citation>
    <scope>PHOSPHORYLATION [LARGE SCALE ANALYSIS] AT THR-80</scope>
    <scope>IDENTIFICATION BY MASS SPECTROMETRY [LARGE SCALE ANALYSIS]</scope>
    <source>
        <tissue>Brain</tissue>
        <tissue>Brown adipose tissue</tissue>
        <tissue>Kidney</tissue>
        <tissue>Liver</tissue>
    </source>
</reference>
<reference key="8">
    <citation type="journal article" date="2011" name="J. Neurosci.">
        <title>Parkin interacts with Ambra1 to induce mitophagy.</title>
        <authorList>
            <person name="Van Humbeeck C."/>
            <person name="Cornelissen T."/>
            <person name="Hofkens H."/>
            <person name="Mandemakers W."/>
            <person name="Gevaert K."/>
            <person name="De Strooper B."/>
            <person name="Vandenberghe W."/>
        </authorList>
    </citation>
    <scope>FUNCTION</scope>
    <scope>INTERACTION WITH AMBRA1</scope>
</reference>
<reference key="9">
    <citation type="journal article" date="2012" name="Hum. Mol. Genet.">
        <title>Parkin interacts with Klokin1 for mitochondrial import and maintenance of membrane potential.</title>
        <authorList>
            <person name="Kuroda Y."/>
            <person name="Sako W."/>
            <person name="Goto S."/>
            <person name="Sawada T."/>
            <person name="Uchida D."/>
            <person name="Izumi Y."/>
            <person name="Takahashi T."/>
            <person name="Kagawa N."/>
            <person name="Matsumoto M."/>
            <person name="Matsumoto M."/>
            <person name="Takahashi R."/>
            <person name="Kaji R."/>
            <person name="Mitsui T."/>
        </authorList>
    </citation>
    <scope>FUNCTION</scope>
    <scope>INTERACTION WITH CHPF</scope>
    <scope>DISRUPTION PHENOTYPE</scope>
</reference>
<reference key="10">
    <citation type="journal article" date="2014" name="Circ. Res.">
        <title>Mitochondrial contagion induced by Parkin deficiency in Drosophila hearts and its containment by suppressing mitofusin.</title>
        <authorList>
            <person name="Bhandari P."/>
            <person name="Song M."/>
            <person name="Chen Y."/>
            <person name="Burelle Y."/>
            <person name="Dorn G.W. II"/>
        </authorList>
    </citation>
    <scope>FUNCTION</scope>
</reference>
<reference key="11">
    <citation type="journal article" date="2014" name="Elife">
        <title>MUL1 acts in parallel to the PINK1/parkin pathway in regulating mitofusin and compensates for loss of PINK1/parkin.</title>
        <authorList>
            <person name="Yun J."/>
            <person name="Puri R."/>
            <person name="Yang H."/>
            <person name="Lizzio M.A."/>
            <person name="Wu C."/>
            <person name="Sheng Z.H."/>
            <person name="Guo M."/>
        </authorList>
    </citation>
    <scope>FUNCTION</scope>
    <scope>DISRUPTION PHENOTYPE</scope>
</reference>
<reference key="12">
    <citation type="journal article" date="2014" name="PLoS Genet.">
        <title>Phosphorylation of mitochondrial polyubiquitin by PINK1 promotes Parkin mitochondrial tethering.</title>
        <authorList>
            <person name="Shiba-Fukushima K."/>
            <person name="Arano T."/>
            <person name="Matsumoto G."/>
            <person name="Inoshita T."/>
            <person name="Yoshida S."/>
            <person name="Ishihama Y."/>
            <person name="Ryu K.Y."/>
            <person name="Nukina N."/>
            <person name="Hattori N."/>
            <person name="Imai Y."/>
        </authorList>
    </citation>
    <scope>FUNCTION</scope>
</reference>
<reference key="13">
    <citation type="journal article" date="2018" name="Nat. Commun.">
        <title>Synaptotagmin-11 is a critical mediator of parkin-linked neurotoxicity and Parkinson's disease-like pathology.</title>
        <authorList>
            <person name="Wang C."/>
            <person name="Kang X."/>
            <person name="Zhou L."/>
            <person name="Chai Z."/>
            <person name="Wu Q."/>
            <person name="Huang R."/>
            <person name="Xu H."/>
            <person name="Hu M."/>
            <person name="Sun X."/>
            <person name="Sun S."/>
            <person name="Li J."/>
            <person name="Jiao R."/>
            <person name="Zuo P."/>
            <person name="Zheng L."/>
            <person name="Yue Z."/>
            <person name="Zhou Z."/>
        </authorList>
    </citation>
    <scope>FUNCTION</scope>
</reference>
<reference key="14">
    <citation type="journal article" date="2020" name="Proc. Natl. Acad. Sci. U.S.A.">
        <title>Decision between mitophagy and apoptosis by Parkin via VDAC1 ubiquitination.</title>
        <authorList>
            <person name="Ham S.J."/>
            <person name="Lee D."/>
            <person name="Yoo H."/>
            <person name="Jun K."/>
            <person name="Shin H."/>
            <person name="Chung J."/>
        </authorList>
    </citation>
    <scope>FUNCTION</scope>
    <scope>SUBCELLULAR LOCATION</scope>
</reference>
<reference key="15">
    <citation type="journal article" date="2003" name="J. Biomol. NMR">
        <title>NMR structure of ubiquitin-like domain in PARKIN: gene product of familial Parkinson's disease.</title>
        <authorList>
            <person name="Tashiro M."/>
            <person name="Okubo S."/>
            <person name="Shimotakahara S."/>
            <person name="Hatanaka H."/>
            <person name="Yasuda H."/>
            <person name="Kainosho M."/>
            <person name="Yokoyama S."/>
            <person name="Shindo H."/>
        </authorList>
    </citation>
    <scope>STRUCTURE BY NMR OF 1-76</scope>
</reference>
<proteinExistence type="evidence at protein level"/>
<feature type="chain" id="PRO_0000058577" description="E3 ubiquitin-protein ligase parkin">
    <location>
        <begin position="1"/>
        <end position="464"/>
    </location>
</feature>
<feature type="domain" description="Ubiquitin-like" evidence="3">
    <location>
        <begin position="1"/>
        <end position="76"/>
    </location>
</feature>
<feature type="zinc finger region" description="RING-type 0; atypical">
    <location>
        <begin position="140"/>
        <end position="224"/>
    </location>
</feature>
<feature type="zinc finger region" description="RING-type 1" evidence="4">
    <location>
        <begin position="237"/>
        <end position="292"/>
    </location>
</feature>
<feature type="zinc finger region" description="IBR-type" evidence="4">
    <location>
        <begin position="312"/>
        <end position="376"/>
    </location>
</feature>
<feature type="zinc finger region" description="RING-type 2; atypical" evidence="4">
    <location>
        <begin position="417"/>
        <end position="448"/>
    </location>
</feature>
<feature type="region of interest" description="Disordered" evidence="5">
    <location>
        <begin position="70"/>
        <end position="96"/>
    </location>
</feature>
<feature type="region of interest" description="Necessary for PINK1-dependent localization to mitochondria" evidence="1">
    <location>
        <begin position="77"/>
        <end position="236"/>
    </location>
</feature>
<feature type="region of interest" description="SYT11 binding 1" evidence="1">
    <location>
        <begin position="203"/>
        <end position="237"/>
    </location>
</feature>
<feature type="region of interest" description="TRIAD supradomain" evidence="4">
    <location>
        <begin position="233"/>
        <end position="464"/>
    </location>
</feature>
<feature type="region of interest" description="SYT11 binding 2" evidence="1">
    <location>
        <begin position="256"/>
        <end position="292"/>
    </location>
</feature>
<feature type="region of interest" description="REP" evidence="2">
    <location>
        <begin position="377"/>
        <end position="409"/>
    </location>
</feature>
<feature type="compositionally biased region" description="Polar residues" evidence="5">
    <location>
        <begin position="80"/>
        <end position="96"/>
    </location>
</feature>
<feature type="active site" evidence="4">
    <location>
        <position position="430"/>
    </location>
</feature>
<feature type="binding site" evidence="4">
    <location>
        <position position="237"/>
    </location>
    <ligand>
        <name>Zn(2+)</name>
        <dbReference type="ChEBI" id="CHEBI:29105"/>
        <label>1</label>
    </ligand>
</feature>
<feature type="binding site" evidence="4">
    <location>
        <position position="240"/>
    </location>
    <ligand>
        <name>Zn(2+)</name>
        <dbReference type="ChEBI" id="CHEBI:29105"/>
        <label>1</label>
    </ligand>
</feature>
<feature type="binding site" evidence="4">
    <location>
        <position position="252"/>
    </location>
    <ligand>
        <name>Zn(2+)</name>
        <dbReference type="ChEBI" id="CHEBI:29105"/>
        <label>2</label>
    </ligand>
</feature>
<feature type="binding site" evidence="4">
    <location>
        <position position="256"/>
    </location>
    <ligand>
        <name>Zn(2+)</name>
        <dbReference type="ChEBI" id="CHEBI:29105"/>
        <label>2</label>
    </ligand>
</feature>
<feature type="binding site" evidence="4">
    <location>
        <position position="259"/>
    </location>
    <ligand>
        <name>Zn(2+)</name>
        <dbReference type="ChEBI" id="CHEBI:29105"/>
        <label>1</label>
    </ligand>
</feature>
<feature type="binding site" evidence="4">
    <location>
        <position position="262"/>
    </location>
    <ligand>
        <name>Zn(2+)</name>
        <dbReference type="ChEBI" id="CHEBI:29105"/>
        <label>1</label>
    </ligand>
</feature>
<feature type="binding site" evidence="4">
    <location>
        <position position="288"/>
    </location>
    <ligand>
        <name>Zn(2+)</name>
        <dbReference type="ChEBI" id="CHEBI:29105"/>
        <label>2</label>
    </ligand>
</feature>
<feature type="binding site" evidence="4">
    <location>
        <position position="292"/>
    </location>
    <ligand>
        <name>Zn(2+)</name>
        <dbReference type="ChEBI" id="CHEBI:29105"/>
        <label>2</label>
    </ligand>
</feature>
<feature type="binding site" evidence="4">
    <location>
        <position position="331"/>
    </location>
    <ligand>
        <name>Zn(2+)</name>
        <dbReference type="ChEBI" id="CHEBI:29105"/>
        <label>3</label>
    </ligand>
</feature>
<feature type="binding site" evidence="4">
    <location>
        <position position="336"/>
    </location>
    <ligand>
        <name>Zn(2+)</name>
        <dbReference type="ChEBI" id="CHEBI:29105"/>
        <label>3</label>
    </ligand>
</feature>
<feature type="binding site" evidence="4">
    <location>
        <position position="351"/>
    </location>
    <ligand>
        <name>Zn(2+)</name>
        <dbReference type="ChEBI" id="CHEBI:29105"/>
        <label>3</label>
    </ligand>
</feature>
<feature type="binding site" evidence="4">
    <location>
        <position position="359"/>
    </location>
    <ligand>
        <name>Zn(2+)</name>
        <dbReference type="ChEBI" id="CHEBI:29105"/>
        <label>3</label>
    </ligand>
</feature>
<feature type="binding site" evidence="4">
    <location>
        <position position="364"/>
    </location>
    <ligand>
        <name>Zn(2+)</name>
        <dbReference type="ChEBI" id="CHEBI:29105"/>
        <label>4</label>
    </ligand>
</feature>
<feature type="binding site" evidence="4">
    <location>
        <position position="367"/>
    </location>
    <ligand>
        <name>Zn(2+)</name>
        <dbReference type="ChEBI" id="CHEBI:29105"/>
        <label>4</label>
    </ligand>
</feature>
<feature type="binding site" evidence="4">
    <location>
        <position position="372"/>
    </location>
    <ligand>
        <name>Zn(2+)</name>
        <dbReference type="ChEBI" id="CHEBI:29105"/>
        <label>4</label>
    </ligand>
</feature>
<feature type="binding site" evidence="4">
    <location>
        <position position="376"/>
    </location>
    <ligand>
        <name>Zn(2+)</name>
        <dbReference type="ChEBI" id="CHEBI:29105"/>
        <label>4</label>
    </ligand>
</feature>
<feature type="binding site" evidence="4">
    <location>
        <position position="417"/>
    </location>
    <ligand>
        <name>Zn(2+)</name>
        <dbReference type="ChEBI" id="CHEBI:29105"/>
        <label>5</label>
    </ligand>
</feature>
<feature type="binding site" evidence="4">
    <location>
        <position position="420"/>
    </location>
    <ligand>
        <name>Zn(2+)</name>
        <dbReference type="ChEBI" id="CHEBI:29105"/>
        <label>5</label>
    </ligand>
</feature>
<feature type="binding site" evidence="4">
    <location>
        <position position="435"/>
    </location>
    <ligand>
        <name>Zn(2+)</name>
        <dbReference type="ChEBI" id="CHEBI:29105"/>
        <label>5</label>
    </ligand>
</feature>
<feature type="binding site" evidence="4">
    <location>
        <position position="440"/>
    </location>
    <ligand>
        <name>Zn(2+)</name>
        <dbReference type="ChEBI" id="CHEBI:29105"/>
        <label>5</label>
    </ligand>
</feature>
<feature type="binding site" evidence="4">
    <location>
        <position position="445"/>
    </location>
    <ligand>
        <name>Zn(2+)</name>
        <dbReference type="ChEBI" id="CHEBI:29105"/>
        <label>6</label>
    </ligand>
</feature>
<feature type="binding site" evidence="4">
    <location>
        <position position="448"/>
    </location>
    <ligand>
        <name>Zn(2+)</name>
        <dbReference type="ChEBI" id="CHEBI:29105"/>
        <label>6</label>
    </ligand>
</feature>
<feature type="binding site" evidence="4">
    <location>
        <position position="456"/>
    </location>
    <ligand>
        <name>Zn(2+)</name>
        <dbReference type="ChEBI" id="CHEBI:29105"/>
        <label>6</label>
    </ligand>
</feature>
<feature type="binding site" evidence="4">
    <location>
        <position position="460"/>
    </location>
    <ligand>
        <name>Zn(2+)</name>
        <dbReference type="ChEBI" id="CHEBI:29105"/>
        <label>6</label>
    </ligand>
</feature>
<feature type="modified residue" description="Phosphoserine; by PINK1" evidence="1">
    <location>
        <position position="65"/>
    </location>
</feature>
<feature type="modified residue" description="Phosphothreonine" evidence="23">
    <location>
        <position position="80"/>
    </location>
</feature>
<feature type="modified residue" description="Phosphothreonine; by PINK1" evidence="1">
    <location>
        <position position="174"/>
    </location>
</feature>
<feature type="modified residue" description="Phosphothreonine" evidence="1">
    <location>
        <position position="216"/>
    </location>
</feature>
<feature type="cross-link" description="Glycyl lysine isopeptide (Lys-Gly) (interchain with G-Cter in ISG15)" evidence="1">
    <location>
        <position position="348"/>
    </location>
</feature>
<feature type="cross-link" description="Glycyl lysine isopeptide (Lys-Gly) (interchain with G-Cter in ISG15)" evidence="1">
    <location>
        <position position="368"/>
    </location>
</feature>
<feature type="splice variant" id="VSP_011713" description="In isoform 3." evidence="18">
    <original>RSPVLVFQCNHRHVICLD</original>
    <variation>SHLPLSSGASVWTRPHLH</variation>
    <location>
        <begin position="244"/>
        <end position="261"/>
    </location>
</feature>
<feature type="splice variant" id="VSP_011714" description="In isoform 2." evidence="18">
    <original>SPVLVFQCNH</original>
    <variation>FMRMSKHRTS</variation>
    <location>
        <begin position="245"/>
        <end position="254"/>
    </location>
</feature>
<feature type="splice variant" id="VSP_011715" description="In isoform 2." evidence="18">
    <location>
        <begin position="255"/>
        <end position="464"/>
    </location>
</feature>
<feature type="splice variant" id="VSP_011716" description="In isoform 3." evidence="18">
    <location>
        <begin position="262"/>
        <end position="464"/>
    </location>
</feature>
<feature type="sequence conflict" description="In Ref. 1 and 2; AAG13890." evidence="19" ref="1 2">
    <original>P</original>
    <variation>PA</variation>
    <location>
        <position position="137"/>
    </location>
</feature>
<feature type="strand" evidence="24">
    <location>
        <begin position="1"/>
        <end position="11"/>
    </location>
</feature>
<feature type="strand" evidence="24">
    <location>
        <begin position="13"/>
        <end position="17"/>
    </location>
</feature>
<feature type="helix" evidence="24">
    <location>
        <begin position="23"/>
        <end position="34"/>
    </location>
</feature>
<feature type="helix" evidence="24">
    <location>
        <begin position="38"/>
        <end position="40"/>
    </location>
</feature>
<feature type="strand" evidence="24">
    <location>
        <begin position="41"/>
        <end position="45"/>
    </location>
</feature>
<feature type="strand" evidence="24">
    <location>
        <begin position="48"/>
        <end position="50"/>
    </location>
</feature>
<feature type="helix" evidence="24">
    <location>
        <begin position="56"/>
        <end position="58"/>
    </location>
</feature>
<feature type="strand" evidence="24">
    <location>
        <begin position="66"/>
        <end position="73"/>
    </location>
</feature>
<name>PRKN_MOUSE</name>
<comment type="function">
    <text evidence="1 10 11 12 13 14 15 16 17">Functions within a multiprotein E3 ubiquitin ligase complex, catalyzing the covalent attachment of ubiquitin moieties onto substrate proteins (PubMed:29311685, PubMed:32047033). Substrates include SYT11 and VDAC1 (PubMed:29311685, PubMed:32047033). Other substrates are BCL2, CCNE1, GPR37, RHOT1/MIRO1, MFN1, MFN2, STUB1, SNCAIP, SEPTIN5, TOMM20, USP30, ZNF746, MIRO1 and AIMP2 (By similarity). Mediates monoubiquitination as well as 'Lys-6', 'Lys-11', 'Lys-48'-linked and 'Lys-63'-linked polyubiquitination of substrates depending on the context (PubMed:25474007, PubMed:32047033). Participates in the removal and/or detoxification of abnormally folded or damaged protein by mediating 'Lys-63'-linked polyubiquitination of misfolded proteins such as PARK7: 'Lys-63'-linked polyubiquitinated misfolded proteins are then recognized by HDAC6, leading to their recruitment to aggresomes, followed by degradation (By similarity). Mediates 'Lys-63'-linked polyubiquitination of a 22 kDa O-linked glycosylated isoform of SNCAIP, possibly playing a role in Lewy-body formation (By similarity). Mediates monoubiquitination of BCL2, thereby acting as a positive regulator of autophagy (By similarity). Protects against mitochondrial dysfunction during cellular stress, by acting downstream of PINK1 to coordinate mitochondrial quality control mechanisms that remove and replace dysfunctional mitochondrial components (PubMed:22082830, PubMed:24898855, PubMed:25474007, PubMed:32047033). Depending on the severity of mitochondrial damage and/or dysfunction, activity ranges from preventing apoptosis and stimulating mitochondrial biogenesis to regulating mitochondrial dynamics and eliminating severely damaged mitochondria via mitophagy (PubMed:22082830, PubMed:24898855, PubMed:32047033). Activation and recruitment onto the outer membrane of damaged/dysfunctional mitochondria (OMM) requires PINK1-mediated phosphorylation of both PRKN and ubiquitin (PubMed:25474007). After mitochondrial damage, functions with PINK1 to mediate the decision between mitophagy or preventing apoptosis by inducing either the poly- or monoubiquitination of VDAC1, respectively; polyubiquitination of VDAC1 promotes mitophagy, while monoubiquitination of VDAC1 decreases mitochondrial calcium influx which ultimately inhibits apoptosis (PubMed:32047033). When cellular stress results in irreversible mitochondrial damage, promotes the autophagic degradation of dysfunctional depolarized mitochondria (mitophagy) by promoting the ubiquitination of mitochondrial proteins such as TOMM20, RHOT1/MIRO1, MFN1 and USP30 (PubMed:21753002). Preferentially assembles 'Lys-6'-, 'Lys-11'- and 'Lys-63'-linked polyubiquitin chains, leading to mitophagy (By similarity). The PINK1-PRKN pathway also promotes fission of damaged mitochondria by PINK1-mediated phosphorylation which promotes the PRKN-dependent degradation of mitochondrial proteins involved in fission such as MFN2 (PubMed:24192653). This prevents the refusion of unhealthy mitochondria with the mitochondrial network or initiates mitochondrial fragmentation facilitating their later engulfment by autophagosomes (By similarity). Regulates motility of damaged mitochondria via the ubiquitination and subsequent degradation of MIRO1 and MIRO2; in motor neurons, this likely inhibits mitochondrial intracellular anterograde transport along the axons which probably increases the chance of the mitochondria undergoing mitophagy in the soma (By similarity). Involved in mitochondrial biogenesis via the 'Lys-48'-linked polyubiquitination of transcriptional repressor ZNF746/PARIS which leads to its subsequent proteasomal degradation and allows activation of the transcription factor PPARGC1A (By similarity). Limits the production of reactive oxygen species (ROS) (By similarity). Regulates cyclin-E during neuronal apoptosis (By similarity). In collaboration with CHPF isoform 2, may enhance cell viability and protect cells from oxidative stress (PubMed:22082830). Independently of its ubiquitin ligase activity, protects from apoptosis by the transcriptional repression of p53/TP53 (PubMed:19801972). May protect neurons against alpha synuclein toxicity, proteasomal dysfunction, GPR37 accumulation, and kainate-induced excitotoxicity (By similarity). May play a role in controlling neurotransmitter trafficking at the presynaptic terminal and in calcium-dependent exocytosis. May represent a tumor suppressor gene (By similarity).</text>
</comment>
<comment type="catalytic activity">
    <reaction evidence="1">
        <text>[E2 ubiquitin-conjugating enzyme]-S-ubiquitinyl-L-cysteine + [acceptor protein]-L-lysine = [E2 ubiquitin-conjugating enzyme]-L-cysteine + [acceptor protein]-N(6)-ubiquitinyl-L-lysine.</text>
        <dbReference type="EC" id="2.3.2.31"/>
    </reaction>
</comment>
<comment type="activity regulation">
    <text evidence="1">In the autoinhibited state the side chain of Phe-462 inserts into a hydrophobic groove in RING-0, occluding the ubiquitin acceptor site Cys-430, whereas the REP repressor element binds RING-1 and blocks its E2-binding site. Activation of PRKN requires 2 steps: (1) phosphorylation at Ser-65 by PINK1 and (2) binding to phosphorylated ubiquitin, leading to unlock repression of the catalytic Cys-430 by the RING-0 region via an allosteric mechanism and converting PRKN to its fully-active form. According to another report, phosphorylation at Ser-65 by PINK1 is not essential for activation and only binding to phosphorylated ubiquitin is essential to unlock repression. In addition, ISG15 conjugation positively regulates its ubiquitin E3 ligase activity by suppressing the intramolecular interaction that maintains its autoinhibited conformation.</text>
</comment>
<comment type="pathway">
    <text>Protein modification; protein ubiquitination.</text>
</comment>
<comment type="subunit">
    <text evidence="1 11">Forms an E3 ubiquitin ligase complex with UBE2L3 or UBE2L6. Mediates 'Lys-63'-linked polyubiquitination by associating with UBE2V1. Part of a SCF-like complex, consisting of PRKN, CUL1 and FBXW7. Interacts with SNCAIP. Binds to the C2A and C2B domains of SYT11. Interacts and regulates the turnover of SEPTIN5. Part of a complex, including STUB1, HSP70 and GPR37. The amount of STUB1 in the complex increases during ER stress. STUB1 promotes the dissociation of HSP70 from PRKN and GPR37, thus facilitating PRKN-mediated GPR37 ubiquitination. HSP70 transiently associates with unfolded GPR37 and inhibits the E3 activity of PRKN, whereas, STUB1 enhances the E3 activity of PRKN through promotion of dissociation of HSP70 from PRKN-GPR37 complexes. Interacts with PSMD4 and PACRG. Interacts with LRRK2. Interacts with RANBP2. Interacts with SUMO1 but not SUMO2, which promotes nuclear localization and autoubiquitination. Interacts (via first RING-type domain) with AIMP2 (via N-terminus). Interacts with PSMA7 and RNF41. Interacts with PINK1. Forms a complex with PINK1 and PARK7. Interacts with CHPF, the interaction with isoform 2 may facilitate PRKN transport into the mitochondria. Interacts with MFN2 (phosphorylated), promotes PRKN localization in dysfunctional depolarized mitochondria. Interacts with FBXO7; this promotes translocation to dysfunctional depolarized mitochondria. Interacts with ZNF746. Interacts with heat shock protein 70 family members, including HSPA1L, HSPA1A and HSPA8; interaction HSPA1L promotes translocation to damaged mitochondria. Interacts with BAG4 and, to a lesser extent, BAG5; interaction with BAG4 inhibits translocation to damaged mitochondria. Forms a complex with PRKN and PARK7 (By similarity). Interacts with AMBRA1 (PubMed:21753002).</text>
</comment>
<comment type="interaction">
    <interactant intactId="EBI-973635">
        <id>Q9WVS6</id>
    </interactant>
    <interactant intactId="EBI-9029659">
        <id>Q6IQX7-2</id>
        <label>Chpf</label>
    </interactant>
    <organismsDiffer>false</organismsDiffer>
    <experiments>3</experiments>
</comment>
<comment type="interaction">
    <interactant intactId="EBI-973635">
        <id>Q9WVS6</id>
    </interactant>
    <interactant intactId="EBI-298727">
        <id>P47811</id>
        <label>Mapk14</label>
    </interactant>
    <organismsDiffer>false</organismsDiffer>
    <experiments>3</experiments>
</comment>
<comment type="interaction">
    <interactant intactId="EBI-973635">
        <id>Q9WVS6</id>
    </interactant>
    <interactant intactId="EBI-643756">
        <id>Q9ERU9</id>
        <label>Ranbp2</label>
    </interactant>
    <organismsDiffer>false</organismsDiffer>
    <experiments>2</experiments>
</comment>
<comment type="interaction">
    <interactant intactId="EBI-973635">
        <id>Q9WVS6</id>
    </interactant>
    <interactant intactId="EBI-444641">
        <id>P68510</id>
        <label>Ywhah</label>
    </interactant>
    <organismsDiffer>false</organismsDiffer>
    <experiments>2</experiments>
</comment>
<comment type="interaction">
    <interactant intactId="EBI-973635">
        <id>Q9WVS6</id>
    </interactant>
    <interactant intactId="EBI-3862590">
        <id>Q3U133</id>
        <label>Znf746</label>
    </interactant>
    <organismsDiffer>false</organismsDiffer>
    <experiments>2</experiments>
</comment>
<comment type="subcellular location">
    <subcellularLocation>
        <location evidence="20 21">Cytoplasm</location>
        <location evidence="20 21">Cytosol</location>
    </subcellularLocation>
    <subcellularLocation>
        <location evidence="1">Nucleus</location>
    </subcellularLocation>
    <subcellularLocation>
        <location evidence="7">Endoplasmic reticulum</location>
    </subcellularLocation>
    <subcellularLocation>
        <location evidence="17">Mitochondrion</location>
    </subcellularLocation>
    <subcellularLocation>
        <location evidence="7">Mitochondrion outer membrane</location>
    </subcellularLocation>
    <subcellularLocation>
        <location evidence="8">Cell projection</location>
        <location evidence="8">Neuron projection</location>
    </subcellularLocation>
    <subcellularLocation>
        <location evidence="7">Postsynaptic density</location>
    </subcellularLocation>
    <subcellularLocation>
        <location evidence="7">Presynapse</location>
    </subcellularLocation>
    <text evidence="1">Mainly localizes in the cytosol. Co-localizes with SYT11 in neutrites. Co-localizes with SNCAIP in brainstem Lewy bodies. Translocates to dysfunctional mitochondria that have lost the mitochondrial membrane potential; recruitment to mitochondria is PINK1-dependent. Mitochondrial localization also gradually increases with cellular growth.</text>
</comment>
<comment type="alternative products">
    <event type="alternative splicing"/>
    <isoform>
        <id>Q9WVS6-1</id>
        <name>1</name>
        <sequence type="displayed"/>
    </isoform>
    <isoform>
        <id>Q9WVS6-2</id>
        <name>2</name>
        <sequence type="described" ref="VSP_011714 VSP_011715"/>
    </isoform>
    <isoform>
        <id>Q9WVS6-3</id>
        <name>3</name>
        <sequence type="described" ref="VSP_011713 VSP_011716"/>
    </isoform>
</comment>
<comment type="tissue specificity">
    <text evidence="6 7 8">Expressed in all subdivisions of the brain (at protein level) (PubMed:11675120). Highly expressed in brainstem, cranial nerve, pontine, cerebellar nuclei, indusium griseum, nuclei reticularis, strata oriens and laccunosum moleculare of the hippocampal CA2 region (PubMed:11122330). Low levels were found in the telencephalon and diencephalon (PubMed:11122330). Expressed in heart, liver, skeletal muscle, kidney and testis (PubMed:10818204).</text>
</comment>
<comment type="developmental stage">
    <text evidence="8">In late 10 dpc weakly expressed in postmitotic neurons in the mantle layer of the developing nervous system (at protein level). Expression increased at 11-12 dpc (at protein level). At 15-16 dpc, as more specialized neurons and nonneural cells are formed, expression is more tissue specific (at protein level). Expression was highest in the neurites, moderate levels were observed in the migrating postmitotic neurons in the intermediate and neopallial layers (at protein level). In the diencephalon and other CNS regions, while the weakest level of expression was observed in the cell bodies (at protein level). In nonneural tissues, high levels of expression were found in the muscle walls of the intestine, the blood vessels and the dermis (at protein level).</text>
</comment>
<comment type="domain">
    <text evidence="1">The ubiquitin-like domain binds the PSMD4 subunit of 26S proteasomes.</text>
</comment>
<comment type="domain">
    <text evidence="1">The RING-type 1 zinc finger domain is required to repress p53/TP53 transcription.</text>
</comment>
<comment type="domain">
    <text evidence="1">Members of the RBR family are atypical E3 ligases. They interact with the E2 conjugating enzyme UBE2L3 and function like HECT-type E3 enzymes: they bind E2s via the first RING domain, but require an obligate trans-thiolation step during the ubiquitin transfer, requiring a conserved cysteine residue in the second RING domain.</text>
</comment>
<comment type="PTM">
    <text evidence="1">Auto-ubiquitinates in an E2-dependent manner leading to its own degradation. Also polyubiquitinated by RNF41 for proteasomal degradation.</text>
</comment>
<comment type="PTM">
    <text evidence="9">S-nitrosylated.</text>
</comment>
<comment type="PTM">
    <text evidence="1">Phosphorylated. Activation requires phosphorylation at Ser-65 by PINK1 and binding to PINK1 phosphorylated ubiquitin. Phosphorylation at Thr-174 by PINK1 and at Thr-216 is important for mitochondrial localization.</text>
</comment>
<comment type="disruption phenotype">
    <text evidence="10 12 14">In brain, increased protein levels of p53/TP53 and CHPF (PubMed:19801972, PubMed:22082830). Cortical neurons display a slight increase in process fragmentation but no dendritic retraction (PubMed:24898855).</text>
</comment>
<comment type="similarity">
    <text evidence="19">Belongs to the RBR family. Parkin subfamily.</text>
</comment>